<sequence length="391" mass="42327">MASASFVKPNTLSSPWIGQRSFAHTSASSSPPPRVSFAIRAGAYSDELVKTAKSIASPGRGILAIDESNATCGKRLASIGLDNTEDNRQAYRQLLLTTPGLGDYISGSILFEETLYQSTKDGKTFVDCLRDANIVPGIKVDKGLSPLAGSNEESWCQGLDGLASRSAEYYKQGARFAKWRTVVSVPCGPSALAVKEAAWGLARYAAISQDNGLVPIVEPEILLDGDHPIERTLEVAEKVWSEVFFYLAQNNVMFEGILLKPSMVTPGAEHKNKASPETVADFTLTMLKRRVPPAVPGIMFLSGGQSEAEATLNLNAMNQSPNPWHVSFSYARALQNSVLRTWQGKPEKIEASQKALLVRAKANSLAQLGKYSAEGENEDAKKGMFVKGYTY</sequence>
<comment type="function">
    <text evidence="3">Plays a key role in glycolysis and gluconeogenesis.</text>
</comment>
<comment type="catalytic activity">
    <reaction evidence="3">
        <text>beta-D-fructose 1,6-bisphosphate = D-glyceraldehyde 3-phosphate + dihydroxyacetone phosphate</text>
        <dbReference type="Rhea" id="RHEA:14729"/>
        <dbReference type="ChEBI" id="CHEBI:32966"/>
        <dbReference type="ChEBI" id="CHEBI:57642"/>
        <dbReference type="ChEBI" id="CHEBI:59776"/>
        <dbReference type="EC" id="4.1.2.13"/>
    </reaction>
</comment>
<comment type="pathway">
    <text evidence="11">Carbohydrate degradation; glycolysis; D-glyceraldehyde 3-phosphate and glycerone phosphate from D-glucose: step 4/4.</text>
</comment>
<comment type="subunit">
    <text evidence="2">Homotetramer.</text>
</comment>
<comment type="subcellular location">
    <subcellularLocation>
        <location evidence="7">Plastid</location>
        <location evidence="7">Chloroplast</location>
        <location evidence="7">Plastoglobule</location>
    </subcellularLocation>
</comment>
<comment type="tissue specificity">
    <text evidence="9">Expressed in roots, and at low levels in rosettes leaves, cauline leaves, stems and flowers.</text>
</comment>
<comment type="induction">
    <text evidence="5 9">Down-regulated by oxidative stress (PubMed:12492832). Induced by fructose and sucrose (PubMed:22561114). Down-regulated by abiotic stresses (PubMed:22561114).</text>
</comment>
<comment type="PTM">
    <text evidence="8">Can be trimethylated at Lys-387 by LSMT-L, but the trimethylation has no effect in vitro.</text>
</comment>
<comment type="PTM">
    <text evidence="6">S-glutathionylated.</text>
</comment>
<comment type="similarity">
    <text evidence="11">Belongs to the class I fructose-bisphosphate aldolase family.</text>
</comment>
<organism>
    <name type="scientific">Arabidopsis thaliana</name>
    <name type="common">Mouse-ear cress</name>
    <dbReference type="NCBI Taxonomy" id="3702"/>
    <lineage>
        <taxon>Eukaryota</taxon>
        <taxon>Viridiplantae</taxon>
        <taxon>Streptophyta</taxon>
        <taxon>Embryophyta</taxon>
        <taxon>Tracheophyta</taxon>
        <taxon>Spermatophyta</taxon>
        <taxon>Magnoliopsida</taxon>
        <taxon>eudicotyledons</taxon>
        <taxon>Gunneridae</taxon>
        <taxon>Pentapetalae</taxon>
        <taxon>rosids</taxon>
        <taxon>malvids</taxon>
        <taxon>Brassicales</taxon>
        <taxon>Brassicaceae</taxon>
        <taxon>Camelineae</taxon>
        <taxon>Arabidopsis</taxon>
    </lineage>
</organism>
<accession>Q9ZU52</accession>
<name>ALFP3_ARATH</name>
<keyword id="KW-0150">Chloroplast</keyword>
<keyword id="KW-0903">Direct protein sequencing</keyword>
<keyword id="KW-0318">Glutathionylation</keyword>
<keyword id="KW-0324">Glycolysis</keyword>
<keyword id="KW-0456">Lyase</keyword>
<keyword id="KW-0488">Methylation</keyword>
<keyword id="KW-0597">Phosphoprotein</keyword>
<keyword id="KW-0934">Plastid</keyword>
<keyword id="KW-1185">Reference proteome</keyword>
<keyword id="KW-0704">Schiff base</keyword>
<keyword id="KW-0809">Transit peptide</keyword>
<evidence type="ECO:0000250" key="1">
    <source>
        <dbReference type="UniProtKB" id="P00883"/>
    </source>
</evidence>
<evidence type="ECO:0000250" key="2">
    <source>
        <dbReference type="UniProtKB" id="Q944G9"/>
    </source>
</evidence>
<evidence type="ECO:0000250" key="3">
    <source>
        <dbReference type="UniProtKB" id="Q9SJQ9"/>
    </source>
</evidence>
<evidence type="ECO:0000255" key="4"/>
<evidence type="ECO:0000269" key="5">
    <source>
    </source>
</evidence>
<evidence type="ECO:0000269" key="6">
    <source>
    </source>
</evidence>
<evidence type="ECO:0000269" key="7">
    <source>
    </source>
</evidence>
<evidence type="ECO:0000269" key="8">
    <source>
    </source>
</evidence>
<evidence type="ECO:0000269" key="9">
    <source>
    </source>
</evidence>
<evidence type="ECO:0000303" key="10">
    <source>
    </source>
</evidence>
<evidence type="ECO:0000305" key="11"/>
<gene>
    <name evidence="10" type="primary">FBA3</name>
    <name type="synonym">PDE345</name>
    <name type="ordered locus">At2g01140</name>
    <name type="ORF">F10A8.2</name>
</gene>
<proteinExistence type="evidence at protein level"/>
<reference key="1">
    <citation type="journal article" date="1999" name="Nature">
        <title>Sequence and analysis of chromosome 2 of the plant Arabidopsis thaliana.</title>
        <authorList>
            <person name="Lin X."/>
            <person name="Kaul S."/>
            <person name="Rounsley S.D."/>
            <person name="Shea T.P."/>
            <person name="Benito M.-I."/>
            <person name="Town C.D."/>
            <person name="Fujii C.Y."/>
            <person name="Mason T.M."/>
            <person name="Bowman C.L."/>
            <person name="Barnstead M.E."/>
            <person name="Feldblyum T.V."/>
            <person name="Buell C.R."/>
            <person name="Ketchum K.A."/>
            <person name="Lee J.J."/>
            <person name="Ronning C.M."/>
            <person name="Koo H.L."/>
            <person name="Moffat K.S."/>
            <person name="Cronin L.A."/>
            <person name="Shen M."/>
            <person name="Pai G."/>
            <person name="Van Aken S."/>
            <person name="Umayam L."/>
            <person name="Tallon L.J."/>
            <person name="Gill J.E."/>
            <person name="Adams M.D."/>
            <person name="Carrera A.J."/>
            <person name="Creasy T.H."/>
            <person name="Goodman H.M."/>
            <person name="Somerville C.R."/>
            <person name="Copenhaver G.P."/>
            <person name="Preuss D."/>
            <person name="Nierman W.C."/>
            <person name="White O."/>
            <person name="Eisen J.A."/>
            <person name="Salzberg S.L."/>
            <person name="Fraser C.M."/>
            <person name="Venter J.C."/>
        </authorList>
    </citation>
    <scope>NUCLEOTIDE SEQUENCE [LARGE SCALE GENOMIC DNA]</scope>
    <source>
        <strain>cv. Columbia</strain>
    </source>
</reference>
<reference key="2">
    <citation type="journal article" date="2017" name="Plant J.">
        <title>Araport11: a complete reannotation of the Arabidopsis thaliana reference genome.</title>
        <authorList>
            <person name="Cheng C.Y."/>
            <person name="Krishnakumar V."/>
            <person name="Chan A.P."/>
            <person name="Thibaud-Nissen F."/>
            <person name="Schobel S."/>
            <person name="Town C.D."/>
        </authorList>
    </citation>
    <scope>GENOME REANNOTATION</scope>
    <source>
        <strain>cv. Columbia</strain>
    </source>
</reference>
<reference key="3">
    <citation type="journal article" date="2003" name="Science">
        <title>Empirical analysis of transcriptional activity in the Arabidopsis genome.</title>
        <authorList>
            <person name="Yamada K."/>
            <person name="Lim J."/>
            <person name="Dale J.M."/>
            <person name="Chen H."/>
            <person name="Shinn P."/>
            <person name="Palm C.J."/>
            <person name="Southwick A.M."/>
            <person name="Wu H.C."/>
            <person name="Kim C.J."/>
            <person name="Nguyen M."/>
            <person name="Pham P.K."/>
            <person name="Cheuk R.F."/>
            <person name="Karlin-Newmann G."/>
            <person name="Liu S.X."/>
            <person name="Lam B."/>
            <person name="Sakano H."/>
            <person name="Wu T."/>
            <person name="Yu G."/>
            <person name="Miranda M."/>
            <person name="Quach H.L."/>
            <person name="Tripp M."/>
            <person name="Chang C.H."/>
            <person name="Lee J.M."/>
            <person name="Toriumi M.J."/>
            <person name="Chan M.M."/>
            <person name="Tang C.C."/>
            <person name="Onodera C.S."/>
            <person name="Deng J.M."/>
            <person name="Akiyama K."/>
            <person name="Ansari Y."/>
            <person name="Arakawa T."/>
            <person name="Banh J."/>
            <person name="Banno F."/>
            <person name="Bowser L."/>
            <person name="Brooks S.Y."/>
            <person name="Carninci P."/>
            <person name="Chao Q."/>
            <person name="Choy N."/>
            <person name="Enju A."/>
            <person name="Goldsmith A.D."/>
            <person name="Gurjal M."/>
            <person name="Hansen N.F."/>
            <person name="Hayashizaki Y."/>
            <person name="Johnson-Hopson C."/>
            <person name="Hsuan V.W."/>
            <person name="Iida K."/>
            <person name="Karnes M."/>
            <person name="Khan S."/>
            <person name="Koesema E."/>
            <person name="Ishida J."/>
            <person name="Jiang P.X."/>
            <person name="Jones T."/>
            <person name="Kawai J."/>
            <person name="Kamiya A."/>
            <person name="Meyers C."/>
            <person name="Nakajima M."/>
            <person name="Narusaka M."/>
            <person name="Seki M."/>
            <person name="Sakurai T."/>
            <person name="Satou M."/>
            <person name="Tamse R."/>
            <person name="Vaysberg M."/>
            <person name="Wallender E.K."/>
            <person name="Wong C."/>
            <person name="Yamamura Y."/>
            <person name="Yuan S."/>
            <person name="Shinozaki K."/>
            <person name="Davis R.W."/>
            <person name="Theologis A."/>
            <person name="Ecker J.R."/>
        </authorList>
    </citation>
    <scope>NUCLEOTIDE SEQUENCE [LARGE SCALE MRNA]</scope>
    <source>
        <strain>cv. Columbia</strain>
    </source>
</reference>
<reference key="4">
    <citation type="submission" date="2002-03" db="EMBL/GenBank/DDBJ databases">
        <title>Full-length cDNA from Arabidopsis thaliana.</title>
        <authorList>
            <person name="Brover V.V."/>
            <person name="Troukhan M.E."/>
            <person name="Alexandrov N.A."/>
            <person name="Lu Y.-P."/>
            <person name="Flavell R.B."/>
            <person name="Feldmann K.A."/>
        </authorList>
    </citation>
    <scope>NUCLEOTIDE SEQUENCE [LARGE SCALE MRNA]</scope>
</reference>
<reference key="5">
    <citation type="journal article" date="2002" name="Plant J.">
        <title>The impact of oxidative stress on Arabidopsis mitochondria.</title>
        <authorList>
            <person name="Sweetlove L.J."/>
            <person name="Heazlewood J.L."/>
            <person name="Herald V."/>
            <person name="Holtzapffel R."/>
            <person name="Day D.A."/>
            <person name="Leaver C.J."/>
            <person name="Millar A.H."/>
        </authorList>
    </citation>
    <scope>DOWN-REGULATION BY OXIDATIVE STRESS</scope>
</reference>
<reference key="6">
    <citation type="journal article" date="2003" name="Plant Cell Physiol.">
        <title>The sugar-metabolic enzymes aldolase and triose-phosphate isomerase are targets of glutathionylation in Arabidopsis thaliana: detection using biotinylated glutathione.</title>
        <authorList>
            <person name="Ito H."/>
            <person name="Iwabuchi M."/>
            <person name="Ogawa K."/>
        </authorList>
    </citation>
    <scope>PROTEIN SEQUENCE OF 42-50</scope>
    <scope>GLUTATHIONYLATION</scope>
</reference>
<reference key="7">
    <citation type="journal article" date="2006" name="Plant Physiol.">
        <title>Protein profiling of plastoglobules in chloroplasts and chromoplasts. A surprising site for differential accumulation of metabolic enzymes.</title>
        <authorList>
            <person name="Ytterberg A.J."/>
            <person name="Peltier J.-B."/>
            <person name="van Wijk K.J."/>
        </authorList>
    </citation>
    <scope>IDENTIFICATION BY MASS SPECTROMETRY</scope>
    <scope>SUBCELLULAR LOCATION [LARGE SCALE ANALYSIS]</scope>
    <source>
        <strain>cv. Columbia</strain>
    </source>
</reference>
<reference key="8">
    <citation type="journal article" date="2007" name="Mol. Cell. Proteomics">
        <title>Multidimensional protein identification technology (MudPIT) analysis of ubiquitinated proteins in plants.</title>
        <authorList>
            <person name="Maor R."/>
            <person name="Jones A."/>
            <person name="Nuehse T.S."/>
            <person name="Studholme D.J."/>
            <person name="Peck S.C."/>
            <person name="Shirasu K."/>
        </authorList>
    </citation>
    <scope>IDENTIFICATION BY MASS SPECTROMETRY [LARGE SCALE ANALYSIS]</scope>
    <source>
        <strain>cv. Landsberg erecta</strain>
    </source>
</reference>
<reference key="9">
    <citation type="journal article" date="2012" name="Gene">
        <title>Identification and characterization of fructose 1,6-bisphosphate aldolase genes in Arabidopsis reveal a gene family with diverse responses to abiotic stresses.</title>
        <authorList>
            <person name="Lu W."/>
            <person name="Tang X."/>
            <person name="Huo Y."/>
            <person name="Xu R."/>
            <person name="Qi S."/>
            <person name="Huang J."/>
            <person name="Zheng C."/>
            <person name="Wu C.A."/>
        </authorList>
    </citation>
    <scope>TISSUE SPECIFICITY</scope>
    <scope>INDUCTION</scope>
    <scope>GENE FAMILY</scope>
    <scope>NOMENCLATURE</scope>
</reference>
<reference key="10">
    <citation type="journal article" date="2012" name="J. Biol. Chem.">
        <title>Characterization of chloroplastic fructose 1,6-bisphosphate aldolases as lysine-methylated proteins in plants.</title>
        <authorList>
            <person name="Mininno M."/>
            <person name="Brugiere S."/>
            <person name="Pautre V."/>
            <person name="Gilgen A."/>
            <person name="Ma S."/>
            <person name="Ferro M."/>
            <person name="Tardif M."/>
            <person name="Alban C."/>
            <person name="Ravanel S."/>
        </authorList>
    </citation>
    <scope>METHYLATION AT LYS-387</scope>
</reference>
<protein>
    <recommendedName>
        <fullName evidence="11">Fructose-bisphosphate aldolase 3, chloroplastic</fullName>
        <shortName evidence="10">AtFBA3</shortName>
        <ecNumber evidence="11">4.1.2.13</ecNumber>
    </recommendedName>
    <alternativeName>
        <fullName>Protein PIGMENT DEFECTIVE 345</fullName>
    </alternativeName>
</protein>
<dbReference type="EC" id="4.1.2.13" evidence="11"/>
<dbReference type="EMBL" id="AC006200">
    <property type="protein sequence ID" value="AAD14543.1"/>
    <property type="molecule type" value="Genomic_DNA"/>
</dbReference>
<dbReference type="EMBL" id="CP002685">
    <property type="protein sequence ID" value="AEC05406.1"/>
    <property type="molecule type" value="Genomic_DNA"/>
</dbReference>
<dbReference type="EMBL" id="AF325014">
    <property type="protein sequence ID" value="AAG40366.1"/>
    <property type="molecule type" value="mRNA"/>
</dbReference>
<dbReference type="EMBL" id="AY086203">
    <property type="protein sequence ID" value="AAM64281.1"/>
    <property type="molecule type" value="mRNA"/>
</dbReference>
<dbReference type="PIR" id="B84421">
    <property type="entry name" value="B84421"/>
</dbReference>
<dbReference type="RefSeq" id="NP_178224.1">
    <property type="nucleotide sequence ID" value="NM_126176.5"/>
</dbReference>
<dbReference type="SMR" id="Q9ZU52"/>
<dbReference type="BioGRID" id="47">
    <property type="interactions" value="14"/>
</dbReference>
<dbReference type="FunCoup" id="Q9ZU52">
    <property type="interactions" value="1148"/>
</dbReference>
<dbReference type="IntAct" id="Q9ZU52">
    <property type="interactions" value="1"/>
</dbReference>
<dbReference type="STRING" id="3702.Q9ZU52"/>
<dbReference type="GlyGen" id="Q9ZU52">
    <property type="glycosylation" value="1 site"/>
</dbReference>
<dbReference type="iPTMnet" id="Q9ZU52"/>
<dbReference type="PaxDb" id="3702-AT2G01140.1"/>
<dbReference type="ProteomicsDB" id="244956"/>
<dbReference type="EnsemblPlants" id="AT2G01140.1">
    <property type="protein sequence ID" value="AT2G01140.1"/>
    <property type="gene ID" value="AT2G01140"/>
</dbReference>
<dbReference type="GeneID" id="814643"/>
<dbReference type="Gramene" id="AT2G01140.1">
    <property type="protein sequence ID" value="AT2G01140.1"/>
    <property type="gene ID" value="AT2G01140"/>
</dbReference>
<dbReference type="KEGG" id="ath:AT2G01140"/>
<dbReference type="Araport" id="AT2G01140"/>
<dbReference type="TAIR" id="AT2G01140">
    <property type="gene designation" value="PDE345"/>
</dbReference>
<dbReference type="eggNOG" id="KOG1557">
    <property type="taxonomic scope" value="Eukaryota"/>
</dbReference>
<dbReference type="HOGENOM" id="CLU_031243_0_0_1"/>
<dbReference type="InParanoid" id="Q9ZU52"/>
<dbReference type="OMA" id="TAANCCE"/>
<dbReference type="PhylomeDB" id="Q9ZU52"/>
<dbReference type="BioCyc" id="ARA:AT2G01140-MONOMER"/>
<dbReference type="UniPathway" id="UPA00109">
    <property type="reaction ID" value="UER00183"/>
</dbReference>
<dbReference type="CD-CODE" id="4299E36E">
    <property type="entry name" value="Nucleolus"/>
</dbReference>
<dbReference type="PRO" id="PR:Q9ZU52"/>
<dbReference type="Proteomes" id="UP000006548">
    <property type="component" value="Chromosome 2"/>
</dbReference>
<dbReference type="ExpressionAtlas" id="Q9ZU52">
    <property type="expression patterns" value="baseline and differential"/>
</dbReference>
<dbReference type="GO" id="GO:0009507">
    <property type="term" value="C:chloroplast"/>
    <property type="evidence" value="ECO:0007005"/>
    <property type="project" value="TAIR"/>
</dbReference>
<dbReference type="GO" id="GO:0009570">
    <property type="term" value="C:chloroplast stroma"/>
    <property type="evidence" value="ECO:0007005"/>
    <property type="project" value="TAIR"/>
</dbReference>
<dbReference type="GO" id="GO:0009534">
    <property type="term" value="C:chloroplast thylakoid"/>
    <property type="evidence" value="ECO:0007005"/>
    <property type="project" value="TAIR"/>
</dbReference>
<dbReference type="GO" id="GO:0005739">
    <property type="term" value="C:mitochondrion"/>
    <property type="evidence" value="ECO:0007005"/>
    <property type="project" value="TAIR"/>
</dbReference>
<dbReference type="GO" id="GO:0009536">
    <property type="term" value="C:plastid"/>
    <property type="evidence" value="ECO:0007005"/>
    <property type="project" value="TAIR"/>
</dbReference>
<dbReference type="GO" id="GO:0010287">
    <property type="term" value="C:plastoglobule"/>
    <property type="evidence" value="ECO:0007005"/>
    <property type="project" value="TAIR"/>
</dbReference>
<dbReference type="GO" id="GO:0004332">
    <property type="term" value="F:fructose-bisphosphate aldolase activity"/>
    <property type="evidence" value="ECO:0000250"/>
    <property type="project" value="UniProtKB"/>
</dbReference>
<dbReference type="GO" id="GO:0006094">
    <property type="term" value="P:gluconeogenesis"/>
    <property type="evidence" value="ECO:0000250"/>
    <property type="project" value="UniProtKB"/>
</dbReference>
<dbReference type="GO" id="GO:0006096">
    <property type="term" value="P:glycolytic process"/>
    <property type="evidence" value="ECO:0000250"/>
    <property type="project" value="UniProtKB"/>
</dbReference>
<dbReference type="CDD" id="cd00948">
    <property type="entry name" value="FBP_aldolase_I_a"/>
    <property type="match status" value="1"/>
</dbReference>
<dbReference type="FunFam" id="3.20.20.70:FF:000052">
    <property type="entry name" value="Fructose-bisphosphate aldolase"/>
    <property type="match status" value="1"/>
</dbReference>
<dbReference type="Gene3D" id="3.20.20.70">
    <property type="entry name" value="Aldolase class I"/>
    <property type="match status" value="1"/>
</dbReference>
<dbReference type="InterPro" id="IPR029768">
    <property type="entry name" value="Aldolase_I_AS"/>
</dbReference>
<dbReference type="InterPro" id="IPR013785">
    <property type="entry name" value="Aldolase_TIM"/>
</dbReference>
<dbReference type="InterPro" id="IPR000741">
    <property type="entry name" value="FBA_I"/>
</dbReference>
<dbReference type="NCBIfam" id="NF033379">
    <property type="entry name" value="FrucBisAld_I"/>
    <property type="match status" value="1"/>
</dbReference>
<dbReference type="PANTHER" id="PTHR11627">
    <property type="entry name" value="FRUCTOSE-BISPHOSPHATE ALDOLASE"/>
    <property type="match status" value="1"/>
</dbReference>
<dbReference type="Pfam" id="PF00274">
    <property type="entry name" value="Glycolytic"/>
    <property type="match status" value="1"/>
</dbReference>
<dbReference type="SUPFAM" id="SSF51569">
    <property type="entry name" value="Aldolase"/>
    <property type="match status" value="1"/>
</dbReference>
<dbReference type="PROSITE" id="PS00158">
    <property type="entry name" value="ALDOLASE_CLASS_I"/>
    <property type="match status" value="1"/>
</dbReference>
<feature type="transit peptide" description="Chloroplast" evidence="4">
    <location>
        <begin position="1"/>
        <end position="40"/>
    </location>
</feature>
<feature type="chain" id="PRO_0000286528" description="Fructose-bisphosphate aldolase 3, chloroplastic">
    <location>
        <begin position="41"/>
        <end position="391"/>
    </location>
</feature>
<feature type="active site" description="Proton acceptor" evidence="1">
    <location>
        <position position="218"/>
    </location>
</feature>
<feature type="active site" description="Schiff-base intermediate with dihydroxyacetone-P" evidence="1">
    <location>
        <position position="260"/>
    </location>
</feature>
<feature type="binding site" evidence="1">
    <location>
        <position position="88"/>
    </location>
    <ligand>
        <name>substrate</name>
    </ligand>
</feature>
<feature type="binding site" evidence="1">
    <location>
        <position position="178"/>
    </location>
    <ligand>
        <name>substrate</name>
    </ligand>
</feature>
<feature type="binding site" evidence="1">
    <location>
        <begin position="302"/>
        <end position="304"/>
    </location>
    <ligand>
        <name>substrate</name>
    </ligand>
</feature>
<feature type="site" description="Necessary for preference for fructose 1,6-bisphosphate over fructose 1-phosphate" evidence="1">
    <location>
        <position position="391"/>
    </location>
</feature>
<feature type="modified residue" description="Phosphoserine" evidence="2">
    <location>
        <position position="150"/>
    </location>
</feature>
<feature type="modified residue" description="Phosphoserine" evidence="2">
    <location>
        <position position="208"/>
    </location>
</feature>
<feature type="modified residue" description="N6,N6,N6-trimethyllysine" evidence="8">
    <location>
        <position position="387"/>
    </location>
</feature>